<dbReference type="EC" id="1.3.8.13" evidence="1"/>
<dbReference type="EMBL" id="CP000970">
    <property type="protein sequence ID" value="ACB16358.1"/>
    <property type="molecule type" value="Genomic_DNA"/>
</dbReference>
<dbReference type="RefSeq" id="WP_000347117.1">
    <property type="nucleotide sequence ID" value="NC_010498.1"/>
</dbReference>
<dbReference type="SMR" id="B1LFX2"/>
<dbReference type="GeneID" id="93777396"/>
<dbReference type="KEGG" id="ecm:EcSMS35_0040"/>
<dbReference type="HOGENOM" id="CLU_018204_0_2_6"/>
<dbReference type="UniPathway" id="UPA00117"/>
<dbReference type="Proteomes" id="UP000007011">
    <property type="component" value="Chromosome"/>
</dbReference>
<dbReference type="GO" id="GO:0005737">
    <property type="term" value="C:cytoplasm"/>
    <property type="evidence" value="ECO:0007669"/>
    <property type="project" value="UniProtKB-SubCell"/>
</dbReference>
<dbReference type="GO" id="GO:0003995">
    <property type="term" value="F:acyl-CoA dehydrogenase activity"/>
    <property type="evidence" value="ECO:0007669"/>
    <property type="project" value="InterPro"/>
</dbReference>
<dbReference type="GO" id="GO:0050660">
    <property type="term" value="F:flavin adenine dinucleotide binding"/>
    <property type="evidence" value="ECO:0007669"/>
    <property type="project" value="InterPro"/>
</dbReference>
<dbReference type="GO" id="GO:0009437">
    <property type="term" value="P:carnitine metabolic process"/>
    <property type="evidence" value="ECO:0007669"/>
    <property type="project" value="UniProtKB-UniRule"/>
</dbReference>
<dbReference type="CDD" id="cd00567">
    <property type="entry name" value="ACAD"/>
    <property type="match status" value="1"/>
</dbReference>
<dbReference type="FunFam" id="1.20.140.10:FF:000001">
    <property type="entry name" value="Acyl-CoA dehydrogenase"/>
    <property type="match status" value="1"/>
</dbReference>
<dbReference type="FunFam" id="2.40.110.10:FF:000002">
    <property type="entry name" value="Acyl-CoA dehydrogenase fadE12"/>
    <property type="match status" value="1"/>
</dbReference>
<dbReference type="FunFam" id="1.10.540.10:FF:000005">
    <property type="entry name" value="Crotonobetainyl-CoA reductase"/>
    <property type="match status" value="1"/>
</dbReference>
<dbReference type="Gene3D" id="1.10.540.10">
    <property type="entry name" value="Acyl-CoA dehydrogenase/oxidase, N-terminal domain"/>
    <property type="match status" value="1"/>
</dbReference>
<dbReference type="Gene3D" id="2.40.110.10">
    <property type="entry name" value="Butyryl-CoA Dehydrogenase, subunit A, domain 2"/>
    <property type="match status" value="1"/>
</dbReference>
<dbReference type="Gene3D" id="1.20.140.10">
    <property type="entry name" value="Butyryl-CoA Dehydrogenase, subunit A, domain 3"/>
    <property type="match status" value="1"/>
</dbReference>
<dbReference type="HAMAP" id="MF_01052">
    <property type="entry name" value="CaiA"/>
    <property type="match status" value="1"/>
</dbReference>
<dbReference type="InterPro" id="IPR006089">
    <property type="entry name" value="Acyl-CoA_DH_CS"/>
</dbReference>
<dbReference type="InterPro" id="IPR006091">
    <property type="entry name" value="Acyl-CoA_Oxase/DH_mid-dom"/>
</dbReference>
<dbReference type="InterPro" id="IPR046373">
    <property type="entry name" value="Acyl-CoA_Oxase/DH_mid-dom_sf"/>
</dbReference>
<dbReference type="InterPro" id="IPR036250">
    <property type="entry name" value="AcylCo_DH-like_C"/>
</dbReference>
<dbReference type="InterPro" id="IPR009075">
    <property type="entry name" value="AcylCo_DH/oxidase_C"/>
</dbReference>
<dbReference type="InterPro" id="IPR013786">
    <property type="entry name" value="AcylCoA_DH/ox_N"/>
</dbReference>
<dbReference type="InterPro" id="IPR037069">
    <property type="entry name" value="AcylCoA_DH/ox_N_sf"/>
</dbReference>
<dbReference type="InterPro" id="IPR009100">
    <property type="entry name" value="AcylCoA_DH/oxidase_NM_dom_sf"/>
</dbReference>
<dbReference type="InterPro" id="IPR023450">
    <property type="entry name" value="CaiA"/>
</dbReference>
<dbReference type="NCBIfam" id="NF002885">
    <property type="entry name" value="PRK03354.1"/>
    <property type="match status" value="1"/>
</dbReference>
<dbReference type="PANTHER" id="PTHR43884">
    <property type="entry name" value="ACYL-COA DEHYDROGENASE"/>
    <property type="match status" value="1"/>
</dbReference>
<dbReference type="PANTHER" id="PTHR43884:SF12">
    <property type="entry name" value="ISOVALERYL-COA DEHYDROGENASE, MITOCHONDRIAL-RELATED"/>
    <property type="match status" value="1"/>
</dbReference>
<dbReference type="Pfam" id="PF00441">
    <property type="entry name" value="Acyl-CoA_dh_1"/>
    <property type="match status" value="1"/>
</dbReference>
<dbReference type="Pfam" id="PF02770">
    <property type="entry name" value="Acyl-CoA_dh_M"/>
    <property type="match status" value="1"/>
</dbReference>
<dbReference type="Pfam" id="PF02771">
    <property type="entry name" value="Acyl-CoA_dh_N"/>
    <property type="match status" value="1"/>
</dbReference>
<dbReference type="PIRSF" id="PIRSF016578">
    <property type="entry name" value="HsaA"/>
    <property type="match status" value="1"/>
</dbReference>
<dbReference type="SUPFAM" id="SSF47203">
    <property type="entry name" value="Acyl-CoA dehydrogenase C-terminal domain-like"/>
    <property type="match status" value="1"/>
</dbReference>
<dbReference type="SUPFAM" id="SSF56645">
    <property type="entry name" value="Acyl-CoA dehydrogenase NM domain-like"/>
    <property type="match status" value="1"/>
</dbReference>
<dbReference type="PROSITE" id="PS00072">
    <property type="entry name" value="ACYL_COA_DH_1"/>
    <property type="match status" value="1"/>
</dbReference>
<dbReference type="PROSITE" id="PS00073">
    <property type="entry name" value="ACYL_COA_DH_2"/>
    <property type="match status" value="1"/>
</dbReference>
<reference key="1">
    <citation type="journal article" date="2008" name="J. Bacteriol.">
        <title>Insights into the environmental resistance gene pool from the genome sequence of the multidrug-resistant environmental isolate Escherichia coli SMS-3-5.</title>
        <authorList>
            <person name="Fricke W.F."/>
            <person name="Wright M.S."/>
            <person name="Lindell A.H."/>
            <person name="Harkins D.M."/>
            <person name="Baker-Austin C."/>
            <person name="Ravel J."/>
            <person name="Stepanauskas R."/>
        </authorList>
    </citation>
    <scope>NUCLEOTIDE SEQUENCE [LARGE SCALE GENOMIC DNA]</scope>
    <source>
        <strain>SMS-3-5 / SECEC</strain>
    </source>
</reference>
<gene>
    <name evidence="1" type="primary">caiA</name>
    <name type="ordered locus">EcSMS35_0040</name>
</gene>
<feature type="chain" id="PRO_1000136275" description="Crotonobetainyl-CoA reductase">
    <location>
        <begin position="1"/>
        <end position="380"/>
    </location>
</feature>
<protein>
    <recommendedName>
        <fullName evidence="1">Crotonobetainyl-CoA reductase</fullName>
        <ecNumber evidence="1">1.3.8.13</ecNumber>
    </recommendedName>
    <alternativeName>
        <fullName evidence="1">Crotonobetainyl-CoA dehydrogenase</fullName>
    </alternativeName>
</protein>
<name>CAIA_ECOSM</name>
<organism>
    <name type="scientific">Escherichia coli (strain SMS-3-5 / SECEC)</name>
    <dbReference type="NCBI Taxonomy" id="439855"/>
    <lineage>
        <taxon>Bacteria</taxon>
        <taxon>Pseudomonadati</taxon>
        <taxon>Pseudomonadota</taxon>
        <taxon>Gammaproteobacteria</taxon>
        <taxon>Enterobacterales</taxon>
        <taxon>Enterobacteriaceae</taxon>
        <taxon>Escherichia</taxon>
    </lineage>
</organism>
<sequence>MDFNLNDEQELFVAGIRELMASENWEAYFAECDRDSVYPERFVKALADMGIDSLLIPEEHGGLDAGFVTLAAVWMELGRLGAPTYVLYQLPGGFNTFLREGTQEQIDKIMAFRGTGKQMWNSAITEPGAGSDVGSLKTTYTRRNGKIYLNGSKCFITSSAYTPYIVVMARDGASPDKPVYTEWFVDMSKPGIKVTKLEKLGLRMDSCCEITFDDVELDEKDMFGREGNGFNRVKEEFDHERFLVALTNYGTAMCAFEDAARYANQRVQFGEAIGRFQLIQEKFAHMAIKLNSMKNMLYEAAWKADNGTITSGDAAMCKYFCANAAFEVVDSAMQVLGGVGIAGNHRISRFWRDLRVDRVSGGSDEMQILTLGRAVLKQYR</sequence>
<comment type="function">
    <text evidence="1">Catalyzes the reduction of crotonobetainyl-CoA to gamma-butyrobetainyl-CoA.</text>
</comment>
<comment type="catalytic activity">
    <reaction evidence="1">
        <text>4-(trimethylamino)butanoyl-CoA + oxidized [electron-transfer flavoprotein] + H(+) = crotonobetainyl-CoA + reduced [electron-transfer flavoprotein]</text>
        <dbReference type="Rhea" id="RHEA:51584"/>
        <dbReference type="Rhea" id="RHEA-COMP:10685"/>
        <dbReference type="Rhea" id="RHEA-COMP:10686"/>
        <dbReference type="ChEBI" id="CHEBI:15378"/>
        <dbReference type="ChEBI" id="CHEBI:57692"/>
        <dbReference type="ChEBI" id="CHEBI:58307"/>
        <dbReference type="ChEBI" id="CHEBI:60933"/>
        <dbReference type="ChEBI" id="CHEBI:61513"/>
        <dbReference type="EC" id="1.3.8.13"/>
    </reaction>
</comment>
<comment type="cofactor">
    <cofactor evidence="1">
        <name>FAD</name>
        <dbReference type="ChEBI" id="CHEBI:57692"/>
    </cofactor>
</comment>
<comment type="pathway">
    <text evidence="1">Amine and polyamine metabolism; carnitine metabolism.</text>
</comment>
<comment type="subunit">
    <text evidence="1">Homotetramer.</text>
</comment>
<comment type="subcellular location">
    <subcellularLocation>
        <location evidence="1">Cytoplasm</location>
    </subcellularLocation>
</comment>
<comment type="similarity">
    <text evidence="1">Belongs to the acyl-CoA dehydrogenase family.</text>
</comment>
<proteinExistence type="inferred from homology"/>
<keyword id="KW-0963">Cytoplasm</keyword>
<keyword id="KW-0274">FAD</keyword>
<keyword id="KW-0285">Flavoprotein</keyword>
<keyword id="KW-0560">Oxidoreductase</keyword>
<accession>B1LFX2</accession>
<evidence type="ECO:0000255" key="1">
    <source>
        <dbReference type="HAMAP-Rule" id="MF_01052"/>
    </source>
</evidence>